<organism>
    <name type="scientific">Acinetobacter baumannii (strain ACICU)</name>
    <dbReference type="NCBI Taxonomy" id="405416"/>
    <lineage>
        <taxon>Bacteria</taxon>
        <taxon>Pseudomonadati</taxon>
        <taxon>Pseudomonadota</taxon>
        <taxon>Gammaproteobacteria</taxon>
        <taxon>Moraxellales</taxon>
        <taxon>Moraxellaceae</taxon>
        <taxon>Acinetobacter</taxon>
        <taxon>Acinetobacter calcoaceticus/baumannii complex</taxon>
    </lineage>
</organism>
<proteinExistence type="inferred from homology"/>
<protein>
    <recommendedName>
        <fullName evidence="1">Ribosomal RNA small subunit methyltransferase G</fullName>
        <ecNumber evidence="1">2.1.1.170</ecNumber>
    </recommendedName>
    <alternativeName>
        <fullName evidence="1">16S rRNA 7-methylguanosine methyltransferase</fullName>
        <shortName evidence="1">16S rRNA m7G methyltransferase</shortName>
    </alternativeName>
</protein>
<sequence>MHPFFQELQQGSQKLGLSLSDEALTLLLKYQDALVLWNKAYNLTAIRDPKEMLVKHLLDSLSILKDLPAGRLLDVGTGGGMPGMIIALCQPERSCVLLDSNGKKIRFLKQFIADLKLKNVIAVQTRVENQDTIDELGQFDVITSRAFASLTDFVEAARPYLHEQSIIAAMKGLIPVEEMEELKQEFSCKVIELHVPRLDEQRHLLLLQRI</sequence>
<evidence type="ECO:0000255" key="1">
    <source>
        <dbReference type="HAMAP-Rule" id="MF_00074"/>
    </source>
</evidence>
<gene>
    <name evidence="1" type="primary">rsmG</name>
    <name type="ordered locus">ACICU_01597</name>
</gene>
<name>RSMG_ACIBC</name>
<feature type="chain" id="PRO_1000092607" description="Ribosomal RNA small subunit methyltransferase G">
    <location>
        <begin position="1"/>
        <end position="210"/>
    </location>
</feature>
<feature type="binding site" evidence="1">
    <location>
        <position position="76"/>
    </location>
    <ligand>
        <name>S-adenosyl-L-methionine</name>
        <dbReference type="ChEBI" id="CHEBI:59789"/>
    </ligand>
</feature>
<feature type="binding site" evidence="1">
    <location>
        <position position="81"/>
    </location>
    <ligand>
        <name>S-adenosyl-L-methionine</name>
        <dbReference type="ChEBI" id="CHEBI:59789"/>
    </ligand>
</feature>
<feature type="binding site" evidence="1">
    <location>
        <begin position="127"/>
        <end position="128"/>
    </location>
    <ligand>
        <name>S-adenosyl-L-methionine</name>
        <dbReference type="ChEBI" id="CHEBI:59789"/>
    </ligand>
</feature>
<feature type="binding site" evidence="1">
    <location>
        <position position="145"/>
    </location>
    <ligand>
        <name>S-adenosyl-L-methionine</name>
        <dbReference type="ChEBI" id="CHEBI:59789"/>
    </ligand>
</feature>
<dbReference type="EC" id="2.1.1.170" evidence="1"/>
<dbReference type="EMBL" id="CP000863">
    <property type="protein sequence ID" value="ACC56909.1"/>
    <property type="molecule type" value="Genomic_DNA"/>
</dbReference>
<dbReference type="RefSeq" id="WP_000553193.1">
    <property type="nucleotide sequence ID" value="NZ_CP031380.1"/>
</dbReference>
<dbReference type="SMR" id="B2HZC3"/>
<dbReference type="GeneID" id="92893779"/>
<dbReference type="KEGG" id="abc:ACICU_01597"/>
<dbReference type="HOGENOM" id="CLU_065341_2_0_6"/>
<dbReference type="Proteomes" id="UP000008839">
    <property type="component" value="Chromosome"/>
</dbReference>
<dbReference type="GO" id="GO:0005829">
    <property type="term" value="C:cytosol"/>
    <property type="evidence" value="ECO:0007669"/>
    <property type="project" value="TreeGrafter"/>
</dbReference>
<dbReference type="GO" id="GO:0070043">
    <property type="term" value="F:rRNA (guanine-N7-)-methyltransferase activity"/>
    <property type="evidence" value="ECO:0007669"/>
    <property type="project" value="UniProtKB-UniRule"/>
</dbReference>
<dbReference type="Gene3D" id="3.40.50.150">
    <property type="entry name" value="Vaccinia Virus protein VP39"/>
    <property type="match status" value="1"/>
</dbReference>
<dbReference type="HAMAP" id="MF_00074">
    <property type="entry name" value="16SrRNA_methyltr_G"/>
    <property type="match status" value="1"/>
</dbReference>
<dbReference type="InterPro" id="IPR003682">
    <property type="entry name" value="rRNA_ssu_MeTfrase_G"/>
</dbReference>
<dbReference type="InterPro" id="IPR029063">
    <property type="entry name" value="SAM-dependent_MTases_sf"/>
</dbReference>
<dbReference type="NCBIfam" id="TIGR00138">
    <property type="entry name" value="rsmG_gidB"/>
    <property type="match status" value="1"/>
</dbReference>
<dbReference type="PANTHER" id="PTHR31760">
    <property type="entry name" value="S-ADENOSYL-L-METHIONINE-DEPENDENT METHYLTRANSFERASES SUPERFAMILY PROTEIN"/>
    <property type="match status" value="1"/>
</dbReference>
<dbReference type="PANTHER" id="PTHR31760:SF0">
    <property type="entry name" value="S-ADENOSYL-L-METHIONINE-DEPENDENT METHYLTRANSFERASES SUPERFAMILY PROTEIN"/>
    <property type="match status" value="1"/>
</dbReference>
<dbReference type="Pfam" id="PF02527">
    <property type="entry name" value="GidB"/>
    <property type="match status" value="1"/>
</dbReference>
<dbReference type="PIRSF" id="PIRSF003078">
    <property type="entry name" value="GidB"/>
    <property type="match status" value="1"/>
</dbReference>
<dbReference type="SUPFAM" id="SSF53335">
    <property type="entry name" value="S-adenosyl-L-methionine-dependent methyltransferases"/>
    <property type="match status" value="1"/>
</dbReference>
<accession>B2HZC3</accession>
<keyword id="KW-0963">Cytoplasm</keyword>
<keyword id="KW-0489">Methyltransferase</keyword>
<keyword id="KW-0698">rRNA processing</keyword>
<keyword id="KW-0949">S-adenosyl-L-methionine</keyword>
<keyword id="KW-0808">Transferase</keyword>
<comment type="function">
    <text evidence="1">Specifically methylates the N7 position of guanine in position 527 of 16S rRNA.</text>
</comment>
<comment type="catalytic activity">
    <reaction evidence="1">
        <text>guanosine(527) in 16S rRNA + S-adenosyl-L-methionine = N(7)-methylguanosine(527) in 16S rRNA + S-adenosyl-L-homocysteine</text>
        <dbReference type="Rhea" id="RHEA:42732"/>
        <dbReference type="Rhea" id="RHEA-COMP:10209"/>
        <dbReference type="Rhea" id="RHEA-COMP:10210"/>
        <dbReference type="ChEBI" id="CHEBI:57856"/>
        <dbReference type="ChEBI" id="CHEBI:59789"/>
        <dbReference type="ChEBI" id="CHEBI:74269"/>
        <dbReference type="ChEBI" id="CHEBI:74480"/>
        <dbReference type="EC" id="2.1.1.170"/>
    </reaction>
</comment>
<comment type="subcellular location">
    <subcellularLocation>
        <location evidence="1">Cytoplasm</location>
    </subcellularLocation>
</comment>
<comment type="similarity">
    <text evidence="1">Belongs to the methyltransferase superfamily. RNA methyltransferase RsmG family.</text>
</comment>
<reference key="1">
    <citation type="journal article" date="2008" name="Antimicrob. Agents Chemother.">
        <title>Whole-genome pyrosequencing of an epidemic multidrug-resistant Acinetobacter baumannii strain belonging to the European clone II group.</title>
        <authorList>
            <person name="Iacono M."/>
            <person name="Villa L."/>
            <person name="Fortini D."/>
            <person name="Bordoni R."/>
            <person name="Imperi F."/>
            <person name="Bonnal R.J."/>
            <person name="Sicheritz-Ponten T."/>
            <person name="De Bellis G."/>
            <person name="Visca P."/>
            <person name="Cassone A."/>
            <person name="Carattoli A."/>
        </authorList>
    </citation>
    <scope>NUCLEOTIDE SEQUENCE [LARGE SCALE GENOMIC DNA]</scope>
    <source>
        <strain>ACICU</strain>
    </source>
</reference>